<dbReference type="EC" id="3.4.22.43"/>
<dbReference type="EMBL" id="BT021022">
    <property type="protein sequence ID" value="AAX09039.1"/>
    <property type="molecule type" value="mRNA"/>
</dbReference>
<dbReference type="SMR" id="Q5E998"/>
<dbReference type="FunCoup" id="Q5E998">
    <property type="interactions" value="708"/>
</dbReference>
<dbReference type="MEROPS" id="C01.032"/>
<dbReference type="GlyCosmos" id="Q5E998">
    <property type="glycosylation" value="1 site, No reported glycans"/>
</dbReference>
<dbReference type="GlyGen" id="Q5E998">
    <property type="glycosylation" value="1 site"/>
</dbReference>
<dbReference type="InParanoid" id="Q5E998"/>
<dbReference type="OrthoDB" id="10253408at2759"/>
<dbReference type="Proteomes" id="UP000009136">
    <property type="component" value="Unplaced"/>
</dbReference>
<dbReference type="GO" id="GO:0005615">
    <property type="term" value="C:extracellular space"/>
    <property type="evidence" value="ECO:0000318"/>
    <property type="project" value="GO_Central"/>
</dbReference>
<dbReference type="GO" id="GO:0005764">
    <property type="term" value="C:lysosome"/>
    <property type="evidence" value="ECO:0000318"/>
    <property type="project" value="GO_Central"/>
</dbReference>
<dbReference type="GO" id="GO:0004197">
    <property type="term" value="F:cysteine-type endopeptidase activity"/>
    <property type="evidence" value="ECO:0000318"/>
    <property type="project" value="GO_Central"/>
</dbReference>
<dbReference type="GO" id="GO:0051603">
    <property type="term" value="P:proteolysis involved in protein catabolic process"/>
    <property type="evidence" value="ECO:0000318"/>
    <property type="project" value="GO_Central"/>
</dbReference>
<dbReference type="CDD" id="cd02248">
    <property type="entry name" value="Peptidase_C1A"/>
    <property type="match status" value="1"/>
</dbReference>
<dbReference type="FunFam" id="3.90.70.10:FF:000332">
    <property type="entry name" value="Cathepsin L1"/>
    <property type="match status" value="1"/>
</dbReference>
<dbReference type="Gene3D" id="3.90.70.10">
    <property type="entry name" value="Cysteine proteinases"/>
    <property type="match status" value="1"/>
</dbReference>
<dbReference type="InterPro" id="IPR038765">
    <property type="entry name" value="Papain-like_cys_pep_sf"/>
</dbReference>
<dbReference type="InterPro" id="IPR025661">
    <property type="entry name" value="Pept_asp_AS"/>
</dbReference>
<dbReference type="InterPro" id="IPR000169">
    <property type="entry name" value="Pept_cys_AS"/>
</dbReference>
<dbReference type="InterPro" id="IPR025660">
    <property type="entry name" value="Pept_his_AS"/>
</dbReference>
<dbReference type="InterPro" id="IPR013128">
    <property type="entry name" value="Peptidase_C1A"/>
</dbReference>
<dbReference type="InterPro" id="IPR000668">
    <property type="entry name" value="Peptidase_C1A_C"/>
</dbReference>
<dbReference type="InterPro" id="IPR039417">
    <property type="entry name" value="Peptidase_C1A_papain-like"/>
</dbReference>
<dbReference type="InterPro" id="IPR013201">
    <property type="entry name" value="Prot_inhib_I29"/>
</dbReference>
<dbReference type="PANTHER" id="PTHR12411">
    <property type="entry name" value="CYSTEINE PROTEASE FAMILY C1-RELATED"/>
    <property type="match status" value="1"/>
</dbReference>
<dbReference type="Pfam" id="PF08246">
    <property type="entry name" value="Inhibitor_I29"/>
    <property type="match status" value="1"/>
</dbReference>
<dbReference type="Pfam" id="PF00112">
    <property type="entry name" value="Peptidase_C1"/>
    <property type="match status" value="1"/>
</dbReference>
<dbReference type="PRINTS" id="PR00705">
    <property type="entry name" value="PAPAIN"/>
</dbReference>
<dbReference type="SMART" id="SM00848">
    <property type="entry name" value="Inhibitor_I29"/>
    <property type="match status" value="1"/>
</dbReference>
<dbReference type="SMART" id="SM00645">
    <property type="entry name" value="Pept_C1"/>
    <property type="match status" value="1"/>
</dbReference>
<dbReference type="SUPFAM" id="SSF54001">
    <property type="entry name" value="Cysteine proteinases"/>
    <property type="match status" value="1"/>
</dbReference>
<dbReference type="PROSITE" id="PS00640">
    <property type="entry name" value="THIOL_PROTEASE_ASN"/>
    <property type="match status" value="1"/>
</dbReference>
<dbReference type="PROSITE" id="PS00139">
    <property type="entry name" value="THIOL_PROTEASE_CYS"/>
    <property type="match status" value="1"/>
</dbReference>
<dbReference type="PROSITE" id="PS00639">
    <property type="entry name" value="THIOL_PROTEASE_HIS"/>
    <property type="match status" value="1"/>
</dbReference>
<reference key="1">
    <citation type="journal article" date="2005" name="BMC Genomics">
        <title>Characterization of 954 bovine full-CDS cDNA sequences.</title>
        <authorList>
            <person name="Harhay G.P."/>
            <person name="Sonstegard T.S."/>
            <person name="Keele J.W."/>
            <person name="Heaton M.P."/>
            <person name="Clawson M.L."/>
            <person name="Snelling W.M."/>
            <person name="Wiedmann R.T."/>
            <person name="Van Tassell C.P."/>
            <person name="Smith T.P.L."/>
        </authorList>
    </citation>
    <scope>NUCLEOTIDE SEQUENCE [LARGE SCALE MRNA]</scope>
</reference>
<keyword id="KW-1015">Disulfide bond</keyword>
<keyword id="KW-0325">Glycoprotein</keyword>
<keyword id="KW-0378">Hydrolase</keyword>
<keyword id="KW-0458">Lysosome</keyword>
<keyword id="KW-0645">Protease</keyword>
<keyword id="KW-1185">Reference proteome</keyword>
<keyword id="KW-0732">Signal</keyword>
<keyword id="KW-0788">Thiol protease</keyword>
<keyword id="KW-0865">Zymogen</keyword>
<organism>
    <name type="scientific">Bos taurus</name>
    <name type="common">Bovine</name>
    <dbReference type="NCBI Taxonomy" id="9913"/>
    <lineage>
        <taxon>Eukaryota</taxon>
        <taxon>Metazoa</taxon>
        <taxon>Chordata</taxon>
        <taxon>Craniata</taxon>
        <taxon>Vertebrata</taxon>
        <taxon>Euteleostomi</taxon>
        <taxon>Mammalia</taxon>
        <taxon>Eutheria</taxon>
        <taxon>Laurasiatheria</taxon>
        <taxon>Artiodactyla</taxon>
        <taxon>Ruminantia</taxon>
        <taxon>Pecora</taxon>
        <taxon>Bovidae</taxon>
        <taxon>Bovinae</taxon>
        <taxon>Bos</taxon>
    </lineage>
</organism>
<comment type="function">
    <text evidence="1">Cysteine protease. May have an important role in corneal physiology (By similarity).</text>
</comment>
<comment type="catalytic activity">
    <reaction>
        <text>The recombinant enzyme hydrolyzes proteins (serum albumin, collagen) and synthetic substrates (Z-Phe-Arg-NHMec &gt; Z-Leu-Arg-NHMec &gt; Z-Val-Arg-NHMec).</text>
        <dbReference type="EC" id="3.4.22.43"/>
    </reaction>
</comment>
<comment type="subcellular location">
    <subcellularLocation>
        <location evidence="6">Lysosome</location>
    </subcellularLocation>
</comment>
<comment type="similarity">
    <text evidence="3 4 5">Belongs to the peptidase C1 family.</text>
</comment>
<name>CATL2_BOVIN</name>
<sequence length="334" mass="37393">MNPSFFLTVLCLGVASAAPKLDPNLDAHWHQWKATHRRLYGMNEEEWRRAVWEKNKKIIDLHNQEYSEGKHGFRMAMNAFGDMTNEEFRQVMNGFQNQKHKKGKLFHEPLLVDVPKSVDWTKKGYVTPVKNQGQCGSCWAFSATGALEGQMFRKTGKLVSLSEQNLVDCSRAQGNQGCNGGLMDNAFQYIKDNGCLDSEESYPYLATDTNSCNYKPECSAANDTGFVDIPQREKALMKAVATVGPISVAIDAGHTSFQFYKSGIYYDPDCSSKDLDHGVLVVGYGFEGTDSNNNKFWIVKNSWGPEWGWNGYVKMAKDQNNHCGIATAASYPTV</sequence>
<feature type="signal peptide" evidence="2">
    <location>
        <begin position="1"/>
        <end position="17"/>
    </location>
</feature>
<feature type="propeptide" id="PRO_0000238118" description="Activation peptide" evidence="1">
    <location>
        <begin position="18"/>
        <end position="113"/>
    </location>
</feature>
<feature type="chain" id="PRO_0000238119" description="Cathepsin L2">
    <location>
        <begin position="114"/>
        <end position="334"/>
    </location>
</feature>
<feature type="active site" evidence="1">
    <location>
        <position position="138"/>
    </location>
</feature>
<feature type="active site" evidence="1">
    <location>
        <position position="277"/>
    </location>
</feature>
<feature type="active site" evidence="1">
    <location>
        <position position="301"/>
    </location>
</feature>
<feature type="glycosylation site" description="N-linked (GlcNAc...) asparagine" evidence="2">
    <location>
        <position position="222"/>
    </location>
</feature>
<feature type="disulfide bond" evidence="1">
    <location>
        <begin position="135"/>
        <end position="178"/>
    </location>
</feature>
<feature type="disulfide bond" evidence="1">
    <location>
        <begin position="169"/>
        <end position="212"/>
    </location>
</feature>
<feature type="disulfide bond" evidence="1">
    <location>
        <begin position="270"/>
        <end position="323"/>
    </location>
</feature>
<protein>
    <recommendedName>
        <fullName>Cathepsin L2</fullName>
        <ecNumber>3.4.22.43</ecNumber>
    </recommendedName>
</protein>
<gene>
    <name type="primary">CTSV</name>
    <name type="synonym">CTSL2</name>
</gene>
<accession>Q5E998</accession>
<proteinExistence type="evidence at transcript level"/>
<evidence type="ECO:0000250" key="1"/>
<evidence type="ECO:0000255" key="2"/>
<evidence type="ECO:0000255" key="3">
    <source>
        <dbReference type="PROSITE-ProRule" id="PRU10088"/>
    </source>
</evidence>
<evidence type="ECO:0000255" key="4">
    <source>
        <dbReference type="PROSITE-ProRule" id="PRU10089"/>
    </source>
</evidence>
<evidence type="ECO:0000255" key="5">
    <source>
        <dbReference type="PROSITE-ProRule" id="PRU10090"/>
    </source>
</evidence>
<evidence type="ECO:0000305" key="6"/>